<feature type="chain" id="PRO_0000394886" description="Probable beta-glucosidase I">
    <location>
        <begin position="1"/>
        <end position="838"/>
    </location>
</feature>
<feature type="domain" description="PA14" evidence="3">
    <location>
        <begin position="395"/>
        <end position="555"/>
    </location>
</feature>
<feature type="active site" evidence="1">
    <location>
        <position position="225"/>
    </location>
</feature>
<feature type="glycosylation site" description="N-linked (GlcNAc...) asparagine" evidence="2">
    <location>
        <position position="197"/>
    </location>
</feature>
<feature type="glycosylation site" description="N-linked (GlcNAc...) asparagine" evidence="2">
    <location>
        <position position="493"/>
    </location>
</feature>
<evidence type="ECO:0000250" key="1"/>
<evidence type="ECO:0000255" key="2"/>
<evidence type="ECO:0000255" key="3">
    <source>
        <dbReference type="PROSITE-ProRule" id="PRU01164"/>
    </source>
</evidence>
<evidence type="ECO:0000305" key="4"/>
<comment type="function">
    <text evidence="1">Beta-glucosidases are one of a number of cellulolytic enzymes involved in the degradation of cellulosic biomass. Catalyzes the last step releasing glucose from the inhibitory cellobiose (By similarity).</text>
</comment>
<comment type="catalytic activity">
    <reaction>
        <text>Hydrolysis of terminal, non-reducing beta-D-glucosyl residues with release of beta-D-glucose.</text>
        <dbReference type="EC" id="3.2.1.21"/>
    </reaction>
</comment>
<comment type="pathway">
    <text>Glycan metabolism; cellulose degradation.</text>
</comment>
<comment type="subcellular location">
    <subcellularLocation>
        <location evidence="1">Secreted</location>
    </subcellularLocation>
</comment>
<comment type="similarity">
    <text evidence="4">Belongs to the glycosyl hydrolase 3 family.</text>
</comment>
<accession>Q4WU49</accession>
<keyword id="KW-0119">Carbohydrate metabolism</keyword>
<keyword id="KW-0136">Cellulose degradation</keyword>
<keyword id="KW-0325">Glycoprotein</keyword>
<keyword id="KW-0326">Glycosidase</keyword>
<keyword id="KW-0378">Hydrolase</keyword>
<keyword id="KW-0624">Polysaccharide degradation</keyword>
<keyword id="KW-1185">Reference proteome</keyword>
<keyword id="KW-0964">Secreted</keyword>
<sequence length="838" mass="92208">MVQLDVEKTIEELTLGEKVALTAGIDFWHTAAVPRLNIPSLRMSDGPNGVRGTRFFNGVPAACFPCATALGATWDTKLLYEVGRLMGEESIAKGAHVVLGPTINTQRSPLGGRGFESFAEDGVLSGILAGHYCKGLQETGVAATLKHFVCNDQEHERLAVDSIVTMRAMREIYLLPFQLAMRICKTACVMTAYNKVNGTHVSENKQIITDILRKEWGWDGLVMSDWFGTYSTCDAINAGLDLEMPGPTRWRGTALAHAVSSNKAFEFVMDERVRNILNLHNFVEPLGIPENAPEKALNRPEDQALLRRAAAESVVLIKNQDNILPLKKEKPILVIGPNAKTAAYCGGGSASLDAYYTVTPFEGVAAQSQGEVTFSQGVYSYKELPLLGPLLKTDDGKKGFKFRVYNEPPSEPNRQLIDELHLESSSGFLMDYKHPKIKTFTFYVDMEGYFTPEEDGIYDFGVTVVGTGKLFVDDELVVDNSKNQRQGTAMFGNATVEEKGSKELKAGQTYKVVLQFGTAPTSDLDMRGVVIFGPGGFRFGAARRVSQEELISKAAELASQTSQVVIFAGLTSEWETEGYDRDHMDLPPGSDEMISRVLDANPDTVVVIQSGTPVTMPWAHKAKALLQAWFGGNECGNGIADVLYGNVNPAAKLPLSFPVRLQDNPSYLNFRSERGRVLYGEDIYVGYRYYEKVDLAPLFPFGHGLSYTTFSRSDLSLATTPEKPQLEDGEPITVTVSVTNTGSVAGAEIVQLWVAPPPTGVNRPVRELKGFTKVFLQPGETKKVEIVVEKKLATSWWDEQREKWASEKGTYEVLVTGTGDEVLKSSFEVEKTRYWLGL</sequence>
<reference key="1">
    <citation type="journal article" date="2005" name="Nature">
        <title>Genomic sequence of the pathogenic and allergenic filamentous fungus Aspergillus fumigatus.</title>
        <authorList>
            <person name="Nierman W.C."/>
            <person name="Pain A."/>
            <person name="Anderson M.J."/>
            <person name="Wortman J.R."/>
            <person name="Kim H.S."/>
            <person name="Arroyo J."/>
            <person name="Berriman M."/>
            <person name="Abe K."/>
            <person name="Archer D.B."/>
            <person name="Bermejo C."/>
            <person name="Bennett J.W."/>
            <person name="Bowyer P."/>
            <person name="Chen D."/>
            <person name="Collins M."/>
            <person name="Coulsen R."/>
            <person name="Davies R."/>
            <person name="Dyer P.S."/>
            <person name="Farman M.L."/>
            <person name="Fedorova N."/>
            <person name="Fedorova N.D."/>
            <person name="Feldblyum T.V."/>
            <person name="Fischer R."/>
            <person name="Fosker N."/>
            <person name="Fraser A."/>
            <person name="Garcia J.L."/>
            <person name="Garcia M.J."/>
            <person name="Goble A."/>
            <person name="Goldman G.H."/>
            <person name="Gomi K."/>
            <person name="Griffith-Jones S."/>
            <person name="Gwilliam R."/>
            <person name="Haas B.J."/>
            <person name="Haas H."/>
            <person name="Harris D.E."/>
            <person name="Horiuchi H."/>
            <person name="Huang J."/>
            <person name="Humphray S."/>
            <person name="Jimenez J."/>
            <person name="Keller N."/>
            <person name="Khouri H."/>
            <person name="Kitamoto K."/>
            <person name="Kobayashi T."/>
            <person name="Konzack S."/>
            <person name="Kulkarni R."/>
            <person name="Kumagai T."/>
            <person name="Lafton A."/>
            <person name="Latge J.-P."/>
            <person name="Li W."/>
            <person name="Lord A."/>
            <person name="Lu C."/>
            <person name="Majoros W.H."/>
            <person name="May G.S."/>
            <person name="Miller B.L."/>
            <person name="Mohamoud Y."/>
            <person name="Molina M."/>
            <person name="Monod M."/>
            <person name="Mouyna I."/>
            <person name="Mulligan S."/>
            <person name="Murphy L.D."/>
            <person name="O'Neil S."/>
            <person name="Paulsen I."/>
            <person name="Penalva M.A."/>
            <person name="Pertea M."/>
            <person name="Price C."/>
            <person name="Pritchard B.L."/>
            <person name="Quail M.A."/>
            <person name="Rabbinowitsch E."/>
            <person name="Rawlins N."/>
            <person name="Rajandream M.A."/>
            <person name="Reichard U."/>
            <person name="Renauld H."/>
            <person name="Robson G.D."/>
            <person name="Rodriguez de Cordoba S."/>
            <person name="Rodriguez-Pena J.M."/>
            <person name="Ronning C.M."/>
            <person name="Rutter S."/>
            <person name="Salzberg S.L."/>
            <person name="Sanchez M."/>
            <person name="Sanchez-Ferrero J.C."/>
            <person name="Saunders D."/>
            <person name="Seeger K."/>
            <person name="Squares R."/>
            <person name="Squares S."/>
            <person name="Takeuchi M."/>
            <person name="Tekaia F."/>
            <person name="Turner G."/>
            <person name="Vazquez de Aldana C.R."/>
            <person name="Weidman J."/>
            <person name="White O."/>
            <person name="Woodward J.R."/>
            <person name="Yu J.-H."/>
            <person name="Fraser C.M."/>
            <person name="Galagan J.E."/>
            <person name="Asai K."/>
            <person name="Machida M."/>
            <person name="Hall N."/>
            <person name="Barrell B.G."/>
            <person name="Denning D.W."/>
        </authorList>
    </citation>
    <scope>NUCLEOTIDE SEQUENCE [LARGE SCALE GENOMIC DNA]</scope>
    <source>
        <strain>ATCC MYA-4609 / CBS 101355 / FGSC A1100 / Af293</strain>
    </source>
</reference>
<protein>
    <recommendedName>
        <fullName>Probable beta-glucosidase I</fullName>
        <ecNumber>3.2.1.21</ecNumber>
    </recommendedName>
    <alternativeName>
        <fullName>Beta-D-glucoside glucohydrolase I</fullName>
    </alternativeName>
    <alternativeName>
        <fullName>Cellobiase I</fullName>
    </alternativeName>
    <alternativeName>
        <fullName>Gentiobiase I</fullName>
    </alternativeName>
</protein>
<dbReference type="EC" id="3.2.1.21"/>
<dbReference type="EMBL" id="AAHF01000003">
    <property type="protein sequence ID" value="EAL91877.1"/>
    <property type="molecule type" value="Genomic_DNA"/>
</dbReference>
<dbReference type="RefSeq" id="XP_753915.1">
    <property type="nucleotide sequence ID" value="XM_748822.1"/>
</dbReference>
<dbReference type="SMR" id="Q4WU49"/>
<dbReference type="STRING" id="330879.Q4WU49"/>
<dbReference type="GlyCosmos" id="Q4WU49">
    <property type="glycosylation" value="2 sites, No reported glycans"/>
</dbReference>
<dbReference type="EnsemblFungi" id="EAL91877">
    <property type="protein sequence ID" value="EAL91877"/>
    <property type="gene ID" value="AFUA_5G07190"/>
</dbReference>
<dbReference type="GeneID" id="3511295"/>
<dbReference type="KEGG" id="afm:AFUA_5G07190"/>
<dbReference type="VEuPathDB" id="FungiDB:Afu5g07190"/>
<dbReference type="eggNOG" id="ENOG502QR4D">
    <property type="taxonomic scope" value="Eukaryota"/>
</dbReference>
<dbReference type="HOGENOM" id="CLU_004542_4_0_1"/>
<dbReference type="InParanoid" id="Q4WU49"/>
<dbReference type="OMA" id="QLWIVPP"/>
<dbReference type="OrthoDB" id="47059at2759"/>
<dbReference type="UniPathway" id="UPA00696"/>
<dbReference type="Proteomes" id="UP000002530">
    <property type="component" value="Chromosome 5"/>
</dbReference>
<dbReference type="GO" id="GO:0005576">
    <property type="term" value="C:extracellular region"/>
    <property type="evidence" value="ECO:0007669"/>
    <property type="project" value="UniProtKB-SubCell"/>
</dbReference>
<dbReference type="GO" id="GO:0008422">
    <property type="term" value="F:beta-glucosidase activity"/>
    <property type="evidence" value="ECO:0000318"/>
    <property type="project" value="GO_Central"/>
</dbReference>
<dbReference type="GO" id="GO:0030245">
    <property type="term" value="P:cellulose catabolic process"/>
    <property type="evidence" value="ECO:0007669"/>
    <property type="project" value="UniProtKB-UniPathway"/>
</dbReference>
<dbReference type="GO" id="GO:0009251">
    <property type="term" value="P:glucan catabolic process"/>
    <property type="evidence" value="ECO:0000318"/>
    <property type="project" value="GO_Central"/>
</dbReference>
<dbReference type="FunFam" id="3.20.20.300:FF:000006">
    <property type="entry name" value="Beta-glucosidase H"/>
    <property type="match status" value="1"/>
</dbReference>
<dbReference type="FunFam" id="2.60.40.10:FF:000495">
    <property type="entry name" value="Periplasmic beta-glucosidase"/>
    <property type="match status" value="1"/>
</dbReference>
<dbReference type="FunFam" id="2.60.120.260:FF:000119">
    <property type="entry name" value="Probable beta-glucosidase I"/>
    <property type="match status" value="1"/>
</dbReference>
<dbReference type="Gene3D" id="2.60.120.260">
    <property type="entry name" value="Galactose-binding domain-like"/>
    <property type="match status" value="1"/>
</dbReference>
<dbReference type="Gene3D" id="3.40.50.1700">
    <property type="entry name" value="Glycoside hydrolase family 3 C-terminal domain"/>
    <property type="match status" value="1"/>
</dbReference>
<dbReference type="Gene3D" id="3.20.20.300">
    <property type="entry name" value="Glycoside hydrolase, family 3, N-terminal domain"/>
    <property type="match status" value="1"/>
</dbReference>
<dbReference type="Gene3D" id="2.60.40.10">
    <property type="entry name" value="Immunoglobulins"/>
    <property type="match status" value="1"/>
</dbReference>
<dbReference type="InterPro" id="IPR050288">
    <property type="entry name" value="Cellulose_deg_GH3"/>
</dbReference>
<dbReference type="InterPro" id="IPR026891">
    <property type="entry name" value="Fn3-like"/>
</dbReference>
<dbReference type="InterPro" id="IPR019800">
    <property type="entry name" value="Glyco_hydro_3_AS"/>
</dbReference>
<dbReference type="InterPro" id="IPR002772">
    <property type="entry name" value="Glyco_hydro_3_C"/>
</dbReference>
<dbReference type="InterPro" id="IPR036881">
    <property type="entry name" value="Glyco_hydro_3_C_sf"/>
</dbReference>
<dbReference type="InterPro" id="IPR001764">
    <property type="entry name" value="Glyco_hydro_3_N"/>
</dbReference>
<dbReference type="InterPro" id="IPR036962">
    <property type="entry name" value="Glyco_hydro_3_N_sf"/>
</dbReference>
<dbReference type="InterPro" id="IPR017853">
    <property type="entry name" value="Glycoside_hydrolase_SF"/>
</dbReference>
<dbReference type="InterPro" id="IPR013783">
    <property type="entry name" value="Ig-like_fold"/>
</dbReference>
<dbReference type="InterPro" id="IPR037524">
    <property type="entry name" value="PA14/GLEYA"/>
</dbReference>
<dbReference type="InterPro" id="IPR011658">
    <property type="entry name" value="PA14_dom"/>
</dbReference>
<dbReference type="PANTHER" id="PTHR42715">
    <property type="entry name" value="BETA-GLUCOSIDASE"/>
    <property type="match status" value="1"/>
</dbReference>
<dbReference type="PANTHER" id="PTHR42715:SF27">
    <property type="entry name" value="BETA-GLUCOSIDASE-RELATED"/>
    <property type="match status" value="1"/>
</dbReference>
<dbReference type="Pfam" id="PF14310">
    <property type="entry name" value="Fn3-like"/>
    <property type="match status" value="1"/>
</dbReference>
<dbReference type="Pfam" id="PF00933">
    <property type="entry name" value="Glyco_hydro_3"/>
    <property type="match status" value="1"/>
</dbReference>
<dbReference type="Pfam" id="PF01915">
    <property type="entry name" value="Glyco_hydro_3_C"/>
    <property type="match status" value="1"/>
</dbReference>
<dbReference type="Pfam" id="PF07691">
    <property type="entry name" value="PA14"/>
    <property type="match status" value="1"/>
</dbReference>
<dbReference type="PRINTS" id="PR00133">
    <property type="entry name" value="GLHYDRLASE3"/>
</dbReference>
<dbReference type="SMART" id="SM01217">
    <property type="entry name" value="Fn3_like"/>
    <property type="match status" value="1"/>
</dbReference>
<dbReference type="SMART" id="SM00758">
    <property type="entry name" value="PA14"/>
    <property type="match status" value="1"/>
</dbReference>
<dbReference type="SUPFAM" id="SSF51445">
    <property type="entry name" value="(Trans)glycosidases"/>
    <property type="match status" value="1"/>
</dbReference>
<dbReference type="SUPFAM" id="SSF52279">
    <property type="entry name" value="Beta-D-glucan exohydrolase, C-terminal domain"/>
    <property type="match status" value="1"/>
</dbReference>
<dbReference type="PROSITE" id="PS00775">
    <property type="entry name" value="GLYCOSYL_HYDROL_F3"/>
    <property type="match status" value="1"/>
</dbReference>
<dbReference type="PROSITE" id="PS51820">
    <property type="entry name" value="PA14"/>
    <property type="match status" value="1"/>
</dbReference>
<proteinExistence type="inferred from homology"/>
<gene>
    <name type="primary">bglI</name>
    <name type="ORF">AFUA_5G07190</name>
</gene>
<name>BGLI_ASPFU</name>
<organism>
    <name type="scientific">Aspergillus fumigatus (strain ATCC MYA-4609 / CBS 101355 / FGSC A1100 / Af293)</name>
    <name type="common">Neosartorya fumigata</name>
    <dbReference type="NCBI Taxonomy" id="330879"/>
    <lineage>
        <taxon>Eukaryota</taxon>
        <taxon>Fungi</taxon>
        <taxon>Dikarya</taxon>
        <taxon>Ascomycota</taxon>
        <taxon>Pezizomycotina</taxon>
        <taxon>Eurotiomycetes</taxon>
        <taxon>Eurotiomycetidae</taxon>
        <taxon>Eurotiales</taxon>
        <taxon>Aspergillaceae</taxon>
        <taxon>Aspergillus</taxon>
        <taxon>Aspergillus subgen. Fumigati</taxon>
    </lineage>
</organism>